<sequence>MIKVTKDLVLHLENLARLELSEDQRESLMKDFQEILDYVELLNEVDVEGVEPMYTPVEDSAKLRKGDPRFFEMRDLIKKNFPEEKDGHIKVPGIHR</sequence>
<evidence type="ECO:0000250" key="1"/>
<evidence type="ECO:0000305" key="2"/>
<evidence type="ECO:0007829" key="3">
    <source>
        <dbReference type="PDB" id="3AL0"/>
    </source>
</evidence>
<gene>
    <name type="primary">gatC</name>
    <name type="ordered locus">TM_0252</name>
</gene>
<protein>
    <recommendedName>
        <fullName>Glutamyl-tRNA(Gln) amidotransferase subunit C</fullName>
        <shortName>Glu-ADT subunit C</shortName>
        <ecNumber>6.3.5.-</ecNumber>
    </recommendedName>
</protein>
<organism>
    <name type="scientific">Thermotoga maritima (strain ATCC 43589 / DSM 3109 / JCM 10099 / NBRC 100826 / MSB8)</name>
    <dbReference type="NCBI Taxonomy" id="243274"/>
    <lineage>
        <taxon>Bacteria</taxon>
        <taxon>Thermotogati</taxon>
        <taxon>Thermotogota</taxon>
        <taxon>Thermotogae</taxon>
        <taxon>Thermotogales</taxon>
        <taxon>Thermotogaceae</taxon>
        <taxon>Thermotoga</taxon>
    </lineage>
</organism>
<accession>Q9WY94</accession>
<proteinExistence type="evidence at protein level"/>
<reference key="1">
    <citation type="journal article" date="1999" name="Nature">
        <title>Evidence for lateral gene transfer between Archaea and Bacteria from genome sequence of Thermotoga maritima.</title>
        <authorList>
            <person name="Nelson K.E."/>
            <person name="Clayton R.A."/>
            <person name="Gill S.R."/>
            <person name="Gwinn M.L."/>
            <person name="Dodson R.J."/>
            <person name="Haft D.H."/>
            <person name="Hickey E.K."/>
            <person name="Peterson J.D."/>
            <person name="Nelson W.C."/>
            <person name="Ketchum K.A."/>
            <person name="McDonald L.A."/>
            <person name="Utterback T.R."/>
            <person name="Malek J.A."/>
            <person name="Linher K.D."/>
            <person name="Garrett M.M."/>
            <person name="Stewart A.M."/>
            <person name="Cotton M.D."/>
            <person name="Pratt M.S."/>
            <person name="Phillips C.A."/>
            <person name="Richardson D.L."/>
            <person name="Heidelberg J.F."/>
            <person name="Sutton G.G."/>
            <person name="Fleischmann R.D."/>
            <person name="Eisen J.A."/>
            <person name="White O."/>
            <person name="Salzberg S.L."/>
            <person name="Smith H.O."/>
            <person name="Venter J.C."/>
            <person name="Fraser C.M."/>
        </authorList>
    </citation>
    <scope>NUCLEOTIDE SEQUENCE [LARGE SCALE GENOMIC DNA]</scope>
    <source>
        <strain>ATCC 43589 / DSM 3109 / JCM 10099 / NBRC 100826 / MSB8</strain>
    </source>
</reference>
<keyword id="KW-0002">3D-structure</keyword>
<keyword id="KW-0067">ATP-binding</keyword>
<keyword id="KW-0436">Ligase</keyword>
<keyword id="KW-0547">Nucleotide-binding</keyword>
<keyword id="KW-0648">Protein biosynthesis</keyword>
<keyword id="KW-1185">Reference proteome</keyword>
<dbReference type="EC" id="6.3.5.-"/>
<dbReference type="EMBL" id="AE000512">
    <property type="protein sequence ID" value="AAD35342.1"/>
    <property type="molecule type" value="Genomic_DNA"/>
</dbReference>
<dbReference type="PIR" id="E72399">
    <property type="entry name" value="E72399"/>
</dbReference>
<dbReference type="RefSeq" id="NP_228066.1">
    <property type="nucleotide sequence ID" value="NC_000853.1"/>
</dbReference>
<dbReference type="RefSeq" id="WP_004082956.1">
    <property type="nucleotide sequence ID" value="NZ_CP011107.1"/>
</dbReference>
<dbReference type="PDB" id="3AL0">
    <property type="method" value="X-ray"/>
    <property type="resolution" value="3.37 A"/>
    <property type="chains" value="C=2-96"/>
</dbReference>
<dbReference type="PDBsum" id="3AL0"/>
<dbReference type="SMR" id="Q9WY94"/>
<dbReference type="DIP" id="DIP-59230N"/>
<dbReference type="FunCoup" id="Q9WY94">
    <property type="interactions" value="370"/>
</dbReference>
<dbReference type="IntAct" id="Q9WY94">
    <property type="interactions" value="1"/>
</dbReference>
<dbReference type="STRING" id="243274.TM_0252"/>
<dbReference type="PaxDb" id="243274-THEMA_03465"/>
<dbReference type="EnsemblBacteria" id="AAD35342">
    <property type="protein sequence ID" value="AAD35342"/>
    <property type="gene ID" value="TM_0252"/>
</dbReference>
<dbReference type="KEGG" id="tma:TM0252"/>
<dbReference type="KEGG" id="tmi:THEMA_03465"/>
<dbReference type="KEGG" id="tmm:Tmari_0250"/>
<dbReference type="KEGG" id="tmw:THMA_0259"/>
<dbReference type="eggNOG" id="COG0721">
    <property type="taxonomic scope" value="Bacteria"/>
</dbReference>
<dbReference type="InParanoid" id="Q9WY94"/>
<dbReference type="OrthoDB" id="47632at2"/>
<dbReference type="Proteomes" id="UP000008183">
    <property type="component" value="Chromosome"/>
</dbReference>
<dbReference type="GO" id="GO:0050566">
    <property type="term" value="F:asparaginyl-tRNA synthase (glutamine-hydrolyzing) activity"/>
    <property type="evidence" value="ECO:0007669"/>
    <property type="project" value="RHEA"/>
</dbReference>
<dbReference type="GO" id="GO:0005524">
    <property type="term" value="F:ATP binding"/>
    <property type="evidence" value="ECO:0007669"/>
    <property type="project" value="UniProtKB-KW"/>
</dbReference>
<dbReference type="GO" id="GO:0050567">
    <property type="term" value="F:glutaminyl-tRNA synthase (glutamine-hydrolyzing) activity"/>
    <property type="evidence" value="ECO:0007669"/>
    <property type="project" value="UniProtKB-UniRule"/>
</dbReference>
<dbReference type="GO" id="GO:0070681">
    <property type="term" value="P:glutaminyl-tRNAGln biosynthesis via transamidation"/>
    <property type="evidence" value="ECO:0000318"/>
    <property type="project" value="GO_Central"/>
</dbReference>
<dbReference type="GO" id="GO:0006450">
    <property type="term" value="P:regulation of translational fidelity"/>
    <property type="evidence" value="ECO:0007669"/>
    <property type="project" value="InterPro"/>
</dbReference>
<dbReference type="GO" id="GO:0006412">
    <property type="term" value="P:translation"/>
    <property type="evidence" value="ECO:0007669"/>
    <property type="project" value="UniProtKB-UniRule"/>
</dbReference>
<dbReference type="Gene3D" id="1.10.20.60">
    <property type="entry name" value="Glu-tRNAGln amidotransferase C subunit, N-terminal domain"/>
    <property type="match status" value="1"/>
</dbReference>
<dbReference type="HAMAP" id="MF_00122">
    <property type="entry name" value="GatC"/>
    <property type="match status" value="1"/>
</dbReference>
<dbReference type="InterPro" id="IPR036113">
    <property type="entry name" value="Asp/Glu-ADT_sf_sub_c"/>
</dbReference>
<dbReference type="InterPro" id="IPR003837">
    <property type="entry name" value="GatC"/>
</dbReference>
<dbReference type="NCBIfam" id="TIGR00135">
    <property type="entry name" value="gatC"/>
    <property type="match status" value="1"/>
</dbReference>
<dbReference type="PANTHER" id="PTHR15004">
    <property type="entry name" value="GLUTAMYL-TRNA(GLN) AMIDOTRANSFERASE SUBUNIT C, MITOCHONDRIAL"/>
    <property type="match status" value="1"/>
</dbReference>
<dbReference type="PANTHER" id="PTHR15004:SF0">
    <property type="entry name" value="GLUTAMYL-TRNA(GLN) AMIDOTRANSFERASE SUBUNIT C, MITOCHONDRIAL"/>
    <property type="match status" value="1"/>
</dbReference>
<dbReference type="Pfam" id="PF02686">
    <property type="entry name" value="GatC"/>
    <property type="match status" value="1"/>
</dbReference>
<dbReference type="SUPFAM" id="SSF141000">
    <property type="entry name" value="Glu-tRNAGln amidotransferase C subunit"/>
    <property type="match status" value="1"/>
</dbReference>
<comment type="function">
    <text evidence="1">Allows the formation of correctly charged Asn-tRNA(Asn) or Gln-tRNA(Gln) through the transamidation of misacylated Asp-tRNA(Asn) or Glu-tRNA(Gln) in organisms which lack either or both of asparaginyl-tRNA or glutaminyl-tRNA synthetases. The reaction takes place in the presence of glutamine and ATP through an activated phospho-Asp-tRNA(Asn) or phospho-Glu-tRNA(Gln) (By similarity).</text>
</comment>
<comment type="catalytic activity">
    <reaction>
        <text>L-glutamyl-tRNA(Gln) + L-glutamine + ATP + H2O = L-glutaminyl-tRNA(Gln) + L-glutamate + ADP + phosphate + H(+)</text>
        <dbReference type="Rhea" id="RHEA:17521"/>
        <dbReference type="Rhea" id="RHEA-COMP:9681"/>
        <dbReference type="Rhea" id="RHEA-COMP:9684"/>
        <dbReference type="ChEBI" id="CHEBI:15377"/>
        <dbReference type="ChEBI" id="CHEBI:15378"/>
        <dbReference type="ChEBI" id="CHEBI:29985"/>
        <dbReference type="ChEBI" id="CHEBI:30616"/>
        <dbReference type="ChEBI" id="CHEBI:43474"/>
        <dbReference type="ChEBI" id="CHEBI:58359"/>
        <dbReference type="ChEBI" id="CHEBI:78520"/>
        <dbReference type="ChEBI" id="CHEBI:78521"/>
        <dbReference type="ChEBI" id="CHEBI:456216"/>
    </reaction>
</comment>
<comment type="catalytic activity">
    <reaction>
        <text>L-aspartyl-tRNA(Asn) + L-glutamine + ATP + H2O = L-asparaginyl-tRNA(Asn) + L-glutamate + ADP + phosphate + 2 H(+)</text>
        <dbReference type="Rhea" id="RHEA:14513"/>
        <dbReference type="Rhea" id="RHEA-COMP:9674"/>
        <dbReference type="Rhea" id="RHEA-COMP:9677"/>
        <dbReference type="ChEBI" id="CHEBI:15377"/>
        <dbReference type="ChEBI" id="CHEBI:15378"/>
        <dbReference type="ChEBI" id="CHEBI:29985"/>
        <dbReference type="ChEBI" id="CHEBI:30616"/>
        <dbReference type="ChEBI" id="CHEBI:43474"/>
        <dbReference type="ChEBI" id="CHEBI:58359"/>
        <dbReference type="ChEBI" id="CHEBI:78515"/>
        <dbReference type="ChEBI" id="CHEBI:78516"/>
        <dbReference type="ChEBI" id="CHEBI:456216"/>
    </reaction>
</comment>
<comment type="subunit">
    <text evidence="1">Heterotrimer of A, B and C subunits.</text>
</comment>
<comment type="similarity">
    <text evidence="2">Belongs to the GatC family.</text>
</comment>
<feature type="chain" id="PRO_0000105352" description="Glutamyl-tRNA(Gln) amidotransferase subunit C">
    <location>
        <begin position="1"/>
        <end position="96"/>
    </location>
</feature>
<feature type="helix" evidence="3">
    <location>
        <begin position="8"/>
        <end position="13"/>
    </location>
</feature>
<feature type="turn" evidence="3">
    <location>
        <begin position="14"/>
        <end position="17"/>
    </location>
</feature>
<feature type="strand" evidence="3">
    <location>
        <begin position="22"/>
        <end position="24"/>
    </location>
</feature>
<feature type="helix" evidence="3">
    <location>
        <begin position="25"/>
        <end position="39"/>
    </location>
</feature>
<feature type="turn" evidence="3">
    <location>
        <begin position="40"/>
        <end position="42"/>
    </location>
</feature>
<feature type="helix" evidence="3">
    <location>
        <begin position="74"/>
        <end position="78"/>
    </location>
</feature>
<feature type="strand" evidence="3">
    <location>
        <begin position="88"/>
        <end position="92"/>
    </location>
</feature>
<name>GATC_THEMA</name>